<comment type="function">
    <text evidence="1">An essential GTPase which binds GTP, GDP and possibly (p)ppGpp with moderate affinity, with high nucleotide exchange rates and a fairly low GTP hydrolysis rate. Plays a role in control of the cell cycle, stress response, ribosome biogenesis and in those bacteria that undergo differentiation, in morphogenesis control.</text>
</comment>
<comment type="cofactor">
    <cofactor evidence="1">
        <name>Mg(2+)</name>
        <dbReference type="ChEBI" id="CHEBI:18420"/>
    </cofactor>
</comment>
<comment type="subunit">
    <text evidence="1">Monomer.</text>
</comment>
<comment type="subcellular location">
    <subcellularLocation>
        <location evidence="1">Cytoplasm</location>
    </subcellularLocation>
</comment>
<comment type="similarity">
    <text evidence="1">Belongs to the TRAFAC class OBG-HflX-like GTPase superfamily. OBG GTPase family.</text>
</comment>
<evidence type="ECO:0000255" key="1">
    <source>
        <dbReference type="HAMAP-Rule" id="MF_01454"/>
    </source>
</evidence>
<evidence type="ECO:0000255" key="2">
    <source>
        <dbReference type="PROSITE-ProRule" id="PRU01231"/>
    </source>
</evidence>
<keyword id="KW-0963">Cytoplasm</keyword>
<keyword id="KW-0342">GTP-binding</keyword>
<keyword id="KW-0378">Hydrolase</keyword>
<keyword id="KW-0460">Magnesium</keyword>
<keyword id="KW-0479">Metal-binding</keyword>
<keyword id="KW-0547">Nucleotide-binding</keyword>
<organism>
    <name type="scientific">Haemophilus influenzae (strain 86-028NP)</name>
    <dbReference type="NCBI Taxonomy" id="281310"/>
    <lineage>
        <taxon>Bacteria</taxon>
        <taxon>Pseudomonadati</taxon>
        <taxon>Pseudomonadota</taxon>
        <taxon>Gammaproteobacteria</taxon>
        <taxon>Pasteurellales</taxon>
        <taxon>Pasteurellaceae</taxon>
        <taxon>Haemophilus</taxon>
    </lineage>
</organism>
<accession>Q4QM31</accession>
<protein>
    <recommendedName>
        <fullName evidence="1">GTPase Obg</fullName>
        <ecNumber evidence="1">3.6.5.-</ecNumber>
    </recommendedName>
    <alternativeName>
        <fullName evidence="1">GTP-binding protein Obg</fullName>
    </alternativeName>
</protein>
<sequence length="390" mass="43418">MKFIDESLIRIEAGDGGNGCVSFRREKFIPKGGPDGGDGGDGGDVYLQADENLNTLIDYRFNKRFAAERGENGRSSDCTGRRGKDIILPVPVGTRAIDNDTKETLGDLTQHGQKMLVAKGGYHGLGNTRFKSSVNRAPRQKTMGTPGEKRDLLLELMLLADVGMLGLPNAGKSTFIRAVSAAKPKVADYPFTTLVPSLGVVKVDDSHSFVVADIPGLIEGAADGAGLGIRFLKHLERCRVLIHLVDIAPIDGSNPADNVAIIESELFQYSEKLSEKPRWLVFNKIDTMSDEEAEERVREITEQLGWEEDYYLISAATRKNVPPLCRDIMDFIIANPREAETQQVAPEEVKFKWEDYHQEQLAGYQFDDDEDWDDDWTEEDDEGIEFIYKP</sequence>
<reference key="1">
    <citation type="journal article" date="2005" name="J. Bacteriol.">
        <title>Genomic sequence of an otitis media isolate of nontypeable Haemophilus influenzae: comparative study with H. influenzae serotype d, strain KW20.</title>
        <authorList>
            <person name="Harrison A."/>
            <person name="Dyer D.W."/>
            <person name="Gillaspy A."/>
            <person name="Ray W.C."/>
            <person name="Mungur R."/>
            <person name="Carson M.B."/>
            <person name="Zhong H."/>
            <person name="Gipson J."/>
            <person name="Gipson M."/>
            <person name="Johnson L.S."/>
            <person name="Lewis L."/>
            <person name="Bakaletz L.O."/>
            <person name="Munson R.S. Jr."/>
        </authorList>
    </citation>
    <scope>NUCLEOTIDE SEQUENCE [LARGE SCALE GENOMIC DNA]</scope>
    <source>
        <strain>86-028NP</strain>
    </source>
</reference>
<name>OBG_HAEI8</name>
<feature type="chain" id="PRO_0000385962" description="GTPase Obg">
    <location>
        <begin position="1"/>
        <end position="390"/>
    </location>
</feature>
<feature type="domain" description="Obg" evidence="2">
    <location>
        <begin position="1"/>
        <end position="159"/>
    </location>
</feature>
<feature type="domain" description="OBG-type G" evidence="1">
    <location>
        <begin position="160"/>
        <end position="333"/>
    </location>
</feature>
<feature type="binding site" evidence="1">
    <location>
        <begin position="166"/>
        <end position="173"/>
    </location>
    <ligand>
        <name>GTP</name>
        <dbReference type="ChEBI" id="CHEBI:37565"/>
    </ligand>
</feature>
<feature type="binding site" evidence="1">
    <location>
        <position position="173"/>
    </location>
    <ligand>
        <name>Mg(2+)</name>
        <dbReference type="ChEBI" id="CHEBI:18420"/>
    </ligand>
</feature>
<feature type="binding site" evidence="1">
    <location>
        <begin position="191"/>
        <end position="195"/>
    </location>
    <ligand>
        <name>GTP</name>
        <dbReference type="ChEBI" id="CHEBI:37565"/>
    </ligand>
</feature>
<feature type="binding site" evidence="1">
    <location>
        <position position="193"/>
    </location>
    <ligand>
        <name>Mg(2+)</name>
        <dbReference type="ChEBI" id="CHEBI:18420"/>
    </ligand>
</feature>
<feature type="binding site" evidence="1">
    <location>
        <begin position="213"/>
        <end position="216"/>
    </location>
    <ligand>
        <name>GTP</name>
        <dbReference type="ChEBI" id="CHEBI:37565"/>
    </ligand>
</feature>
<feature type="binding site" evidence="1">
    <location>
        <begin position="283"/>
        <end position="286"/>
    </location>
    <ligand>
        <name>GTP</name>
        <dbReference type="ChEBI" id="CHEBI:37565"/>
    </ligand>
</feature>
<feature type="binding site" evidence="1">
    <location>
        <begin position="314"/>
        <end position="316"/>
    </location>
    <ligand>
        <name>GTP</name>
        <dbReference type="ChEBI" id="CHEBI:37565"/>
    </ligand>
</feature>
<gene>
    <name evidence="1" type="primary">obg</name>
    <name type="ordered locus">NTHI1040</name>
</gene>
<dbReference type="EC" id="3.6.5.-" evidence="1"/>
<dbReference type="EMBL" id="CP000057">
    <property type="protein sequence ID" value="AAX87916.1"/>
    <property type="molecule type" value="Genomic_DNA"/>
</dbReference>
<dbReference type="RefSeq" id="WP_005666077.1">
    <property type="nucleotide sequence ID" value="NC_007146.2"/>
</dbReference>
<dbReference type="SMR" id="Q4QM31"/>
<dbReference type="KEGG" id="hit:NTHI1040"/>
<dbReference type="HOGENOM" id="CLU_011747_2_0_6"/>
<dbReference type="Proteomes" id="UP000002525">
    <property type="component" value="Chromosome"/>
</dbReference>
<dbReference type="GO" id="GO:0005737">
    <property type="term" value="C:cytoplasm"/>
    <property type="evidence" value="ECO:0007669"/>
    <property type="project" value="UniProtKB-SubCell"/>
</dbReference>
<dbReference type="GO" id="GO:0005525">
    <property type="term" value="F:GTP binding"/>
    <property type="evidence" value="ECO:0007669"/>
    <property type="project" value="UniProtKB-UniRule"/>
</dbReference>
<dbReference type="GO" id="GO:0003924">
    <property type="term" value="F:GTPase activity"/>
    <property type="evidence" value="ECO:0007669"/>
    <property type="project" value="UniProtKB-UniRule"/>
</dbReference>
<dbReference type="GO" id="GO:0000287">
    <property type="term" value="F:magnesium ion binding"/>
    <property type="evidence" value="ECO:0007669"/>
    <property type="project" value="InterPro"/>
</dbReference>
<dbReference type="GO" id="GO:0042254">
    <property type="term" value="P:ribosome biogenesis"/>
    <property type="evidence" value="ECO:0007669"/>
    <property type="project" value="UniProtKB-UniRule"/>
</dbReference>
<dbReference type="CDD" id="cd01898">
    <property type="entry name" value="Obg"/>
    <property type="match status" value="1"/>
</dbReference>
<dbReference type="FunFam" id="2.70.210.12:FF:000001">
    <property type="entry name" value="GTPase Obg"/>
    <property type="match status" value="1"/>
</dbReference>
<dbReference type="FunFam" id="3.40.50.300:FF:000185">
    <property type="entry name" value="GTPase Obg"/>
    <property type="match status" value="1"/>
</dbReference>
<dbReference type="Gene3D" id="2.70.210.12">
    <property type="entry name" value="GTP1/OBG domain"/>
    <property type="match status" value="1"/>
</dbReference>
<dbReference type="Gene3D" id="3.40.50.300">
    <property type="entry name" value="P-loop containing nucleotide triphosphate hydrolases"/>
    <property type="match status" value="1"/>
</dbReference>
<dbReference type="HAMAP" id="MF_01454">
    <property type="entry name" value="GTPase_Obg"/>
    <property type="match status" value="1"/>
</dbReference>
<dbReference type="InterPro" id="IPR031167">
    <property type="entry name" value="G_OBG"/>
</dbReference>
<dbReference type="InterPro" id="IPR006073">
    <property type="entry name" value="GTP-bd"/>
</dbReference>
<dbReference type="InterPro" id="IPR014100">
    <property type="entry name" value="GTP-bd_Obg/CgtA"/>
</dbReference>
<dbReference type="InterPro" id="IPR006074">
    <property type="entry name" value="GTP1-OBG_CS"/>
</dbReference>
<dbReference type="InterPro" id="IPR006169">
    <property type="entry name" value="GTP1_OBG_dom"/>
</dbReference>
<dbReference type="InterPro" id="IPR036726">
    <property type="entry name" value="GTP1_OBG_dom_sf"/>
</dbReference>
<dbReference type="InterPro" id="IPR045086">
    <property type="entry name" value="OBG_GTPase"/>
</dbReference>
<dbReference type="InterPro" id="IPR027417">
    <property type="entry name" value="P-loop_NTPase"/>
</dbReference>
<dbReference type="NCBIfam" id="TIGR02729">
    <property type="entry name" value="Obg_CgtA"/>
    <property type="match status" value="1"/>
</dbReference>
<dbReference type="NCBIfam" id="NF008955">
    <property type="entry name" value="PRK12297.1"/>
    <property type="match status" value="1"/>
</dbReference>
<dbReference type="NCBIfam" id="NF008956">
    <property type="entry name" value="PRK12299.1"/>
    <property type="match status" value="1"/>
</dbReference>
<dbReference type="PANTHER" id="PTHR11702">
    <property type="entry name" value="DEVELOPMENTALLY REGULATED GTP-BINDING PROTEIN-RELATED"/>
    <property type="match status" value="1"/>
</dbReference>
<dbReference type="PANTHER" id="PTHR11702:SF31">
    <property type="entry name" value="MITOCHONDRIAL RIBOSOME-ASSOCIATED GTPASE 2"/>
    <property type="match status" value="1"/>
</dbReference>
<dbReference type="Pfam" id="PF01018">
    <property type="entry name" value="GTP1_OBG"/>
    <property type="match status" value="1"/>
</dbReference>
<dbReference type="Pfam" id="PF01926">
    <property type="entry name" value="MMR_HSR1"/>
    <property type="match status" value="1"/>
</dbReference>
<dbReference type="PIRSF" id="PIRSF002401">
    <property type="entry name" value="GTP_bd_Obg/CgtA"/>
    <property type="match status" value="1"/>
</dbReference>
<dbReference type="PRINTS" id="PR00326">
    <property type="entry name" value="GTP1OBG"/>
</dbReference>
<dbReference type="SUPFAM" id="SSF82051">
    <property type="entry name" value="Obg GTP-binding protein N-terminal domain"/>
    <property type="match status" value="1"/>
</dbReference>
<dbReference type="SUPFAM" id="SSF52540">
    <property type="entry name" value="P-loop containing nucleoside triphosphate hydrolases"/>
    <property type="match status" value="1"/>
</dbReference>
<dbReference type="PROSITE" id="PS51710">
    <property type="entry name" value="G_OBG"/>
    <property type="match status" value="1"/>
</dbReference>
<dbReference type="PROSITE" id="PS00905">
    <property type="entry name" value="GTP1_OBG"/>
    <property type="match status" value="1"/>
</dbReference>
<dbReference type="PROSITE" id="PS51883">
    <property type="entry name" value="OBG"/>
    <property type="match status" value="1"/>
</dbReference>
<proteinExistence type="inferred from homology"/>